<feature type="chain" id="PRO_0000064805" description="ARS-binding factor 1">
    <location>
        <begin position="1"/>
        <end position="494"/>
    </location>
</feature>
<feature type="region of interest" description="Disordered" evidence="3">
    <location>
        <begin position="82"/>
        <end position="130"/>
    </location>
</feature>
<feature type="region of interest" description="Disordered" evidence="3">
    <location>
        <begin position="273"/>
        <end position="328"/>
    </location>
</feature>
<feature type="region of interest" description="Disordered" evidence="3">
    <location>
        <begin position="467"/>
        <end position="494"/>
    </location>
</feature>
<feature type="compositionally biased region" description="Acidic residues" evidence="3">
    <location>
        <begin position="119"/>
        <end position="130"/>
    </location>
</feature>
<feature type="compositionally biased region" description="Basic residues" evidence="3">
    <location>
        <begin position="281"/>
        <end position="295"/>
    </location>
</feature>
<feature type="compositionally biased region" description="Basic and acidic residues" evidence="3">
    <location>
        <begin position="319"/>
        <end position="328"/>
    </location>
</feature>
<feature type="modified residue" description="Phosphoserine; by PKC" evidence="2">
    <location>
        <position position="400"/>
    </location>
</feature>
<feature type="sequence conflict" description="In Ref. 1; CAA45792." evidence="4" ref="1">
    <location>
        <begin position="131"/>
        <end position="138"/>
    </location>
</feature>
<keyword id="KW-0010">Activator</keyword>
<keyword id="KW-0227">DNA damage</keyword>
<keyword id="KW-0234">DNA repair</keyword>
<keyword id="KW-0235">DNA replication</keyword>
<keyword id="KW-0238">DNA-binding</keyword>
<keyword id="KW-0539">Nucleus</keyword>
<keyword id="KW-0597">Phosphoprotein</keyword>
<keyword id="KW-1185">Reference proteome</keyword>
<keyword id="KW-0804">Transcription</keyword>
<keyword id="KW-0805">Transcription regulation</keyword>
<reference key="1">
    <citation type="journal article" date="1992" name="Nucleic Acids Res.">
        <title>Kluyveromyces contains a functional ABF1-homologue.</title>
        <authorList>
            <person name="Goncalves P.M."/>
            <person name="Maurer K."/>
            <person name="Mager W.H."/>
            <person name="Planta R.J."/>
        </authorList>
    </citation>
    <scope>NUCLEOTIDE SEQUENCE [GENOMIC DNA]</scope>
    <source>
        <strain>ATCC 8585 / CBS 2359 / DSM 70799 / NBRC 1267 / NRRL Y-1140 / WM37</strain>
    </source>
</reference>
<reference key="2">
    <citation type="journal article" date="2004" name="Nature">
        <title>Genome evolution in yeasts.</title>
        <authorList>
            <person name="Dujon B."/>
            <person name="Sherman D."/>
            <person name="Fischer G."/>
            <person name="Durrens P."/>
            <person name="Casaregola S."/>
            <person name="Lafontaine I."/>
            <person name="de Montigny J."/>
            <person name="Marck C."/>
            <person name="Neuveglise C."/>
            <person name="Talla E."/>
            <person name="Goffard N."/>
            <person name="Frangeul L."/>
            <person name="Aigle M."/>
            <person name="Anthouard V."/>
            <person name="Babour A."/>
            <person name="Barbe V."/>
            <person name="Barnay S."/>
            <person name="Blanchin S."/>
            <person name="Beckerich J.-M."/>
            <person name="Beyne E."/>
            <person name="Bleykasten C."/>
            <person name="Boisrame A."/>
            <person name="Boyer J."/>
            <person name="Cattolico L."/>
            <person name="Confanioleri F."/>
            <person name="de Daruvar A."/>
            <person name="Despons L."/>
            <person name="Fabre E."/>
            <person name="Fairhead C."/>
            <person name="Ferry-Dumazet H."/>
            <person name="Groppi A."/>
            <person name="Hantraye F."/>
            <person name="Hennequin C."/>
            <person name="Jauniaux N."/>
            <person name="Joyet P."/>
            <person name="Kachouri R."/>
            <person name="Kerrest A."/>
            <person name="Koszul R."/>
            <person name="Lemaire M."/>
            <person name="Lesur I."/>
            <person name="Ma L."/>
            <person name="Muller H."/>
            <person name="Nicaud J.-M."/>
            <person name="Nikolski M."/>
            <person name="Oztas S."/>
            <person name="Ozier-Kalogeropoulos O."/>
            <person name="Pellenz S."/>
            <person name="Potier S."/>
            <person name="Richard G.-F."/>
            <person name="Straub M.-L."/>
            <person name="Suleau A."/>
            <person name="Swennen D."/>
            <person name="Tekaia F."/>
            <person name="Wesolowski-Louvel M."/>
            <person name="Westhof E."/>
            <person name="Wirth B."/>
            <person name="Zeniou-Meyer M."/>
            <person name="Zivanovic Y."/>
            <person name="Bolotin-Fukuhara M."/>
            <person name="Thierry A."/>
            <person name="Bouchier C."/>
            <person name="Caudron B."/>
            <person name="Scarpelli C."/>
            <person name="Gaillardin C."/>
            <person name="Weissenbach J."/>
            <person name="Wincker P."/>
            <person name="Souciet J.-L."/>
        </authorList>
    </citation>
    <scope>NUCLEOTIDE SEQUENCE [LARGE SCALE GENOMIC DNA]</scope>
    <source>
        <strain>ATCC 8585 / CBS 2359 / DSM 70799 / NBRC 1267 / NRRL Y-1140 / WM37</strain>
    </source>
</reference>
<protein>
    <recommendedName>
        <fullName>ARS-binding factor 1</fullName>
    </recommendedName>
    <alternativeName>
        <fullName>Bidirectionally acting factor</fullName>
    </alternativeName>
</protein>
<organism>
    <name type="scientific">Kluyveromyces lactis (strain ATCC 8585 / CBS 2359 / DSM 70799 / NBRC 1267 / NRRL Y-1140 / WM37)</name>
    <name type="common">Yeast</name>
    <name type="synonym">Candida sphaerica</name>
    <dbReference type="NCBI Taxonomy" id="284590"/>
    <lineage>
        <taxon>Eukaryota</taxon>
        <taxon>Fungi</taxon>
        <taxon>Dikarya</taxon>
        <taxon>Ascomycota</taxon>
        <taxon>Saccharomycotina</taxon>
        <taxon>Saccharomycetes</taxon>
        <taxon>Saccharomycetales</taxon>
        <taxon>Saccharomycetaceae</taxon>
        <taxon>Kluyveromyces</taxon>
    </lineage>
</organism>
<gene>
    <name type="primary">ABF1</name>
    <name type="synonym">BAF1</name>
    <name type="ordered locus">KLLA0F02970g</name>
</gene>
<comment type="function">
    <text>General regulatory factor (GRF) that contributes to transcriptional activation of a large number of genes, as well as to DNA replication, silencing and telomere structure. Involved in the transcription activation of a subset of ribosomal protein genes. Binds the ARS-elements found in many promoters. Binds to the sequence 5'-TCN(7)ACG-3'.</text>
</comment>
<comment type="subcellular location">
    <subcellularLocation>
        <location>Nucleus</location>
    </subcellularLocation>
</comment>
<comment type="PTM">
    <text evidence="1">Extensively phosphorylated on Ser and Thr residues.</text>
</comment>
<comment type="similarity">
    <text evidence="4">Belongs to the ABF1 family.</text>
</comment>
<comment type="sequence caution" evidence="4">
    <conflict type="frameshift">
        <sequence resource="EMBL-CDS" id="CAA45792"/>
    </conflict>
</comment>
<evidence type="ECO:0000250" key="1"/>
<evidence type="ECO:0000255" key="2"/>
<evidence type="ECO:0000256" key="3">
    <source>
        <dbReference type="SAM" id="MobiDB-lite"/>
    </source>
</evidence>
<evidence type="ECO:0000305" key="4"/>
<proteinExistence type="inferred from homology"/>
<accession>P26375</accession>
<accession>Q6CLH5</accession>
<dbReference type="EMBL" id="X64462">
    <property type="protein sequence ID" value="CAA45792.1"/>
    <property type="status" value="ALT_FRAME"/>
    <property type="molecule type" value="Genomic_DNA"/>
</dbReference>
<dbReference type="EMBL" id="CR382126">
    <property type="protein sequence ID" value="CAG97922.1"/>
    <property type="molecule type" value="Genomic_DNA"/>
</dbReference>
<dbReference type="PIR" id="S22654">
    <property type="entry name" value="S22654"/>
</dbReference>
<dbReference type="RefSeq" id="XP_455214.1">
    <property type="nucleotide sequence ID" value="XM_455214.1"/>
</dbReference>
<dbReference type="FunCoup" id="P26375">
    <property type="interactions" value="1526"/>
</dbReference>
<dbReference type="STRING" id="284590.P26375"/>
<dbReference type="PaxDb" id="284590-P26375"/>
<dbReference type="KEGG" id="kla:KLLA0_F02970g"/>
<dbReference type="eggNOG" id="ENOG502QSTW">
    <property type="taxonomic scope" value="Eukaryota"/>
</dbReference>
<dbReference type="HOGENOM" id="CLU_031229_0_0_1"/>
<dbReference type="InParanoid" id="P26375"/>
<dbReference type="OMA" id="HRNKHFT"/>
<dbReference type="Proteomes" id="UP000000598">
    <property type="component" value="Chromosome F"/>
</dbReference>
<dbReference type="GO" id="GO:0005634">
    <property type="term" value="C:nucleus"/>
    <property type="evidence" value="ECO:0007669"/>
    <property type="project" value="UniProtKB-SubCell"/>
</dbReference>
<dbReference type="GO" id="GO:0003677">
    <property type="term" value="F:DNA binding"/>
    <property type="evidence" value="ECO:0007669"/>
    <property type="project" value="UniProtKB-KW"/>
</dbReference>
<dbReference type="GO" id="GO:0006338">
    <property type="term" value="P:chromatin remodeling"/>
    <property type="evidence" value="ECO:0007669"/>
    <property type="project" value="InterPro"/>
</dbReference>
<dbReference type="GO" id="GO:0006281">
    <property type="term" value="P:DNA repair"/>
    <property type="evidence" value="ECO:0007669"/>
    <property type="project" value="UniProtKB-KW"/>
</dbReference>
<dbReference type="GO" id="GO:0006260">
    <property type="term" value="P:DNA replication"/>
    <property type="evidence" value="ECO:0007669"/>
    <property type="project" value="UniProtKB-KW"/>
</dbReference>
<dbReference type="InterPro" id="IPR006774">
    <property type="entry name" value="BAF1_ABF1"/>
</dbReference>
<dbReference type="Pfam" id="PF04684">
    <property type="entry name" value="BAF1_ABF1"/>
    <property type="match status" value="2"/>
</dbReference>
<sequence length="494" mass="55259">MSLYEYKHPIINKDLAAPDPVSAQKRSFPTLEAWYDVINDYEFQSRCPIILKNSHKNKHFTFACHLKSCPFKILLSYQGANNSGSSEDGSPHGLSGDGGSSSSGSNHHNGHTNLAEDGRAEDEDDDEDDDAAVTAAIAAAVAAVADSQETIKGPFVVTKIEPYHNHPLESNLSLQRFVLSKIPKILQVDLKFDAILESLCNDDDNTVAKFRVAQYVEESGILDIIKQRYGLTEAEMDKKMLSNIARRVTTYKARFVLKRKKDGVYAMPTAHQLTGGDHHQVQHHHHPSIPAHHQHQLPEGQQRDVQHHHQQQQQQLQHQEQHQSHVDSGHNVYQNRIGSISDNDDSAIHNLDDTNVRVAAAAAAAAAALQSRENHDTEDLKRTLEQVQDDESLDVGVPDSKRQLHRRERDRVAEALKMATRDILSNQSVDSDVNVDVDLVTGHKQLSPHDDMAEQLRLLSSHLKEVEAEENVSDNNLKKDDIPDENIQPELRGQ</sequence>
<name>ABF1_KLULA</name>